<organism>
    <name type="scientific">Methanococcus voltae</name>
    <dbReference type="NCBI Taxonomy" id="2188"/>
    <lineage>
        <taxon>Archaea</taxon>
        <taxon>Methanobacteriati</taxon>
        <taxon>Methanobacteriota</taxon>
        <taxon>Methanomada group</taxon>
        <taxon>Methanococci</taxon>
        <taxon>Methanococcales</taxon>
        <taxon>Methanococcaceae</taxon>
        <taxon>Methanococcus</taxon>
    </lineage>
</organism>
<accession>Q50833</accession>
<dbReference type="EMBL" id="M59200">
    <property type="protein sequence ID" value="AAA93515.1"/>
    <property type="status" value="ALT_INIT"/>
    <property type="molecule type" value="Genomic_DNA"/>
</dbReference>
<dbReference type="PIR" id="A38542">
    <property type="entry name" value="A38542"/>
</dbReference>
<dbReference type="SMR" id="Q50833"/>
<dbReference type="GlyCosmos" id="Q50833">
    <property type="glycosylation" value="2 sites, No reported glycans"/>
</dbReference>
<dbReference type="iPTMnet" id="Q50833"/>
<dbReference type="GO" id="GO:0005576">
    <property type="term" value="C:extracellular region"/>
    <property type="evidence" value="ECO:0007669"/>
    <property type="project" value="UniProtKB-KW"/>
</dbReference>
<dbReference type="GO" id="GO:0030115">
    <property type="term" value="C:S-layer"/>
    <property type="evidence" value="ECO:0007669"/>
    <property type="project" value="UniProtKB-SubCell"/>
</dbReference>
<dbReference type="GO" id="GO:0071555">
    <property type="term" value="P:cell wall organization"/>
    <property type="evidence" value="ECO:0007669"/>
    <property type="project" value="UniProtKB-KW"/>
</dbReference>
<dbReference type="Gene3D" id="2.60.98.40">
    <property type="match status" value="1"/>
</dbReference>
<dbReference type="InterPro" id="IPR022651">
    <property type="entry name" value="S_layer_C"/>
</dbReference>
<dbReference type="InterPro" id="IPR022650">
    <property type="entry name" value="S_layer_central"/>
</dbReference>
<dbReference type="InterPro" id="IPR006454">
    <property type="entry name" value="S_layer_MJ"/>
</dbReference>
<dbReference type="NCBIfam" id="TIGR01564">
    <property type="entry name" value="S_layer_MJ"/>
    <property type="match status" value="1"/>
</dbReference>
<dbReference type="Pfam" id="PF05124">
    <property type="entry name" value="S_layer_C"/>
    <property type="match status" value="1"/>
</dbReference>
<dbReference type="Pfam" id="PF05123">
    <property type="entry name" value="S_layer_N"/>
    <property type="match status" value="1"/>
</dbReference>
<evidence type="ECO:0000255" key="1">
    <source>
        <dbReference type="PROSITE-ProRule" id="PRU00498"/>
    </source>
</evidence>
<evidence type="ECO:0000269" key="2">
    <source>
    </source>
</evidence>
<evidence type="ECO:0000269" key="3">
    <source>
    </source>
</evidence>
<evidence type="ECO:0000269" key="4">
    <source>
    </source>
</evidence>
<evidence type="ECO:0000303" key="5">
    <source>
    </source>
</evidence>
<evidence type="ECO:0000305" key="6"/>
<evidence type="ECO:0000305" key="7">
    <source>
    </source>
</evidence>
<feature type="signal peptide" evidence="3 4">
    <location>
        <begin position="1" status="less than"/>
        <end position="23"/>
    </location>
</feature>
<feature type="chain" id="PRO_0000032621" description="S-layer protein">
    <location>
        <begin position="24"/>
        <end position="576"/>
    </location>
</feature>
<feature type="glycosylation site" description="N-linked (GlcNAc...) asparagine" evidence="2">
    <location>
        <position position="102"/>
    </location>
</feature>
<feature type="glycosylation site" description="N-linked (GlcNAc...) asparagine" evidence="1">
    <location>
        <position position="132"/>
    </location>
</feature>
<feature type="non-terminal residue">
    <location>
        <position position="1"/>
    </location>
</feature>
<protein>
    <recommendedName>
        <fullName evidence="5">S-layer protein</fullName>
    </recommendedName>
    <alternativeName>
        <fullName>Cell surface glycoprotein</fullName>
    </alternativeName>
    <alternativeName>
        <fullName>Surface layer protein</fullName>
    </alternativeName>
</protein>
<gene>
    <name type="primary">sla</name>
</gene>
<name>CSG_METVO</name>
<sequence length="576" mass="60676">KKIGAIAAGSAMVASALATGVFAVEKIGDVEGFKVIDNGEPTADIVVGSTAAAADVVSAANVAAKVGSMMFKEGEAASGSAKLTVKASAESDDANLKSLLTNGTNDFTELDAGKEAFVVAAADSDYSDALINATTGFANIADNVLYDQAKLAAAVSLGDLSTLSVVKDIDPSDWYADKNKAADVATKDYYDQDGDAVEMLMATVASNDDGKSLTVDEDGVLYASIAYDDDNEDFQRATQVLKEGNRLPFLGEEYALVKLDTDDDIVYLGKEVFDGVLKEGDTYNIGDGYELKVVAILKSGDEYKISLQLMKDGKVVAEKFDKVSATSALKMIYTPGNIGIVVNEAWENVGQDYGYGSTLITKDVIALELGEEYIPDWEVVTIEKDTTTDNTKDSKMTLSDDKITKDNTYGIGLQYVGDEEDNFKSGKAIKIAKYAELELDDEDKEDTKLNLFFSMDETKEATLAAGQKVTVLNSDITLSEVMADAKAPVAFKAPLAVLDTEVSLDAANKKLILVGGPVANALTKELADAGKIEMTVESPATLAVVAGAANGNDVLVVAGGDRAATAEAANALIEML</sequence>
<keyword id="KW-0134">Cell wall</keyword>
<keyword id="KW-0961">Cell wall biogenesis/degradation</keyword>
<keyword id="KW-0903">Direct protein sequencing</keyword>
<keyword id="KW-0325">Glycoprotein</keyword>
<keyword id="KW-0701">S-layer</keyword>
<keyword id="KW-0964">Secreted</keyword>
<keyword id="KW-0732">Signal</keyword>
<proteinExistence type="evidence at protein level"/>
<reference key="1">
    <citation type="journal article" date="1991" name="J. Bacteriol.">
        <title>Nucleotide sequence of the gene encoding the vanadate-sensitive membrane-associated ATPase of Methanococcus voltae.</title>
        <authorList>
            <person name="Dharmavaram R."/>
            <person name="Gillevet P."/>
            <person name="Konisky J."/>
        </authorList>
    </citation>
    <scope>NUCLEOTIDE SEQUENCE [GENOMIC DNA]</scope>
    <scope>PROTEIN SEQUENCE OF 24-37</scope>
</reference>
<reference key="2">
    <citation type="journal article" date="2005" name="J. Biol. Chem.">
        <title>Identification and characterization of the unique N-linked glycan common to the flagellins and S-layer glycoprotein of Methanococcus voltae.</title>
        <authorList>
            <person name="Voisin S."/>
            <person name="Houliston R.S."/>
            <person name="Kelly J."/>
            <person name="Brisson J.-R."/>
            <person name="Watson D."/>
            <person name="Bardy S.L."/>
            <person name="Jarrell K.F."/>
            <person name="Logan S.M."/>
        </authorList>
    </citation>
    <scope>PROTEIN SEQUENCE OF 98-114</scope>
    <scope>GLYCOSYLATION AT ASN-102</scope>
    <scope>GLYCAN STRUCTURE</scope>
    <scope>IDENTIFICATION BY MASS SPECTROMETRY</scope>
    <source>
        <strain>ATCC 33273 / DSM 1537 / NBRC 100457 / OCM 70 / PS</strain>
    </source>
</reference>
<reference key="3">
    <citation type="journal article" date="1994" name="J. Bacteriol.">
        <title>Identification of the Methanococcus voltae S-layer structural gene.</title>
        <authorList>
            <person name="Konisky J."/>
            <person name="Lynn D."/>
            <person name="Hoppert M."/>
            <person name="Mayer F."/>
            <person name="Haney P."/>
        </authorList>
    </citation>
    <scope>IDENTIFICATION</scope>
    <scope>PROTEIN SEQUENCE OF 24-51</scope>
    <scope>FUNCTION</scope>
    <scope>SUBCELLULAR LOCATION</scope>
    <source>
        <strain>ATCC 33273 / DSM 1537 / NBRC 100457 / OCM 70 / PS</strain>
    </source>
</reference>
<comment type="function">
    <text evidence="4">S-layer protein. The S-layer is a paracrystalline mono-layered assembly of proteins which coat the surface of the cell.</text>
</comment>
<comment type="subcellular location">
    <subcellularLocation>
        <location evidence="4">Secreted</location>
        <location evidence="4">Cell wall</location>
        <location evidence="4">S-layer</location>
    </subcellularLocation>
</comment>
<comment type="PTM">
    <text evidence="2">N-linked glycans consist of the 779 Da trisaccharide beta-ManNAc(Thr)-(1-4)-beta-GlcNAc3NAcA-(1-3)-beta-GlcNAc.</text>
</comment>
<comment type="similarity">
    <text evidence="6">Belongs to the Mj S-layer protein family.</text>
</comment>
<comment type="caution">
    <text evidence="7">Was originally thought to be a P-type ATPase.</text>
</comment>
<comment type="sequence caution" evidence="6">
    <conflict type="erroneous initiation">
        <sequence resource="EMBL-CDS" id="AAA93515"/>
    </conflict>
</comment>